<dbReference type="EC" id="1.14.-.-"/>
<dbReference type="EMBL" id="AC007651">
    <property type="protein sequence ID" value="AAD50024.1"/>
    <property type="status" value="ALT_SEQ"/>
    <property type="molecule type" value="Genomic_DNA"/>
</dbReference>
<dbReference type="EMBL" id="CP002684">
    <property type="status" value="NOT_ANNOTATED_CDS"/>
    <property type="molecule type" value="Genomic_DNA"/>
</dbReference>
<dbReference type="EMBL" id="AK229082">
    <property type="status" value="NOT_ANNOTATED_CDS"/>
    <property type="molecule type" value="mRNA"/>
</dbReference>
<dbReference type="PIR" id="D86306">
    <property type="entry name" value="D86306"/>
</dbReference>
<dbReference type="SMR" id="Q9SHG5"/>
<dbReference type="FunCoup" id="Q9SHG5">
    <property type="interactions" value="248"/>
</dbReference>
<dbReference type="STRING" id="3702.Q9SHG5"/>
<dbReference type="PaxDb" id="3702-AT1G17060.1"/>
<dbReference type="ProteomicsDB" id="240497"/>
<dbReference type="Araport" id="AT1G17060"/>
<dbReference type="TAIR" id="AT1G17060"/>
<dbReference type="eggNOG" id="KOG0157">
    <property type="taxonomic scope" value="Eukaryota"/>
</dbReference>
<dbReference type="InParanoid" id="Q9SHG5"/>
<dbReference type="BioCyc" id="ARA:AT1G17060-MONOMER"/>
<dbReference type="PRO" id="PR:Q9SHG5"/>
<dbReference type="Proteomes" id="UP000006548">
    <property type="component" value="Chromosome 1"/>
</dbReference>
<dbReference type="ExpressionAtlas" id="Q9SHG5">
    <property type="expression patterns" value="baseline and differential"/>
</dbReference>
<dbReference type="GO" id="GO:0016020">
    <property type="term" value="C:membrane"/>
    <property type="evidence" value="ECO:0007669"/>
    <property type="project" value="UniProtKB-SubCell"/>
</dbReference>
<dbReference type="GO" id="GO:0020037">
    <property type="term" value="F:heme binding"/>
    <property type="evidence" value="ECO:0007669"/>
    <property type="project" value="InterPro"/>
</dbReference>
<dbReference type="GO" id="GO:0005506">
    <property type="term" value="F:iron ion binding"/>
    <property type="evidence" value="ECO:0007669"/>
    <property type="project" value="InterPro"/>
</dbReference>
<dbReference type="GO" id="GO:0004497">
    <property type="term" value="F:monooxygenase activity"/>
    <property type="evidence" value="ECO:0000318"/>
    <property type="project" value="GO_Central"/>
</dbReference>
<dbReference type="GO" id="GO:0016705">
    <property type="term" value="F:oxidoreductase activity, acting on paired donors, with incorporation or reduction of molecular oxygen"/>
    <property type="evidence" value="ECO:0007669"/>
    <property type="project" value="InterPro"/>
</dbReference>
<dbReference type="CDD" id="cd20642">
    <property type="entry name" value="CYP72"/>
    <property type="match status" value="1"/>
</dbReference>
<dbReference type="Gene3D" id="1.10.630.10">
    <property type="entry name" value="Cytochrome P450"/>
    <property type="match status" value="1"/>
</dbReference>
<dbReference type="InterPro" id="IPR001128">
    <property type="entry name" value="Cyt_P450"/>
</dbReference>
<dbReference type="InterPro" id="IPR017972">
    <property type="entry name" value="Cyt_P450_CS"/>
</dbReference>
<dbReference type="InterPro" id="IPR002401">
    <property type="entry name" value="Cyt_P450_E_grp-I"/>
</dbReference>
<dbReference type="InterPro" id="IPR036396">
    <property type="entry name" value="Cyt_P450_sf"/>
</dbReference>
<dbReference type="InterPro" id="IPR050665">
    <property type="entry name" value="Cytochrome_P450_Monooxygen"/>
</dbReference>
<dbReference type="PANTHER" id="PTHR24282:SF94">
    <property type="entry name" value="CYTOCHROME P450 72C1"/>
    <property type="match status" value="1"/>
</dbReference>
<dbReference type="PANTHER" id="PTHR24282">
    <property type="entry name" value="CYTOCHROME P450 FAMILY MEMBER"/>
    <property type="match status" value="1"/>
</dbReference>
<dbReference type="Pfam" id="PF00067">
    <property type="entry name" value="p450"/>
    <property type="match status" value="1"/>
</dbReference>
<dbReference type="PRINTS" id="PR00463">
    <property type="entry name" value="EP450I"/>
</dbReference>
<dbReference type="PRINTS" id="PR00385">
    <property type="entry name" value="P450"/>
</dbReference>
<dbReference type="SUPFAM" id="SSF48264">
    <property type="entry name" value="Cytochrome P450"/>
    <property type="match status" value="1"/>
</dbReference>
<dbReference type="PROSITE" id="PS00086">
    <property type="entry name" value="CYTOCHROME_P450"/>
    <property type="match status" value="1"/>
</dbReference>
<comment type="function">
    <text evidence="3 4 5 6 7">Atypical cytochrome P450 involved in brassinosteroids (BRs) inactivation and regulation of BRs homeostasis. Does not possess carbon 26 hydroxylase activity and may inactivate BRs by hydroxylation of carbons other than C-26. Acts in association with CYP734A1 to inactivate BRs and modulate photomorphogenesis.</text>
</comment>
<comment type="cofactor">
    <cofactor evidence="1">
        <name>heme</name>
        <dbReference type="ChEBI" id="CHEBI:30413"/>
    </cofactor>
</comment>
<comment type="subcellular location">
    <subcellularLocation>
        <location evidence="2">Membrane</location>
        <topology evidence="2">Single-pass membrane protein</topology>
    </subcellularLocation>
</comment>
<comment type="tissue specificity">
    <text evidence="4 5">Expressed in hypocotyls, roots, cotyledons, stamens and silique junctions.</text>
</comment>
<comment type="induction">
    <text evidence="3 4">By brassinolide (BL), auxin and dark treatment.</text>
</comment>
<comment type="disruption phenotype">
    <text evidence="4 5 6">No visible phenotype under normal growth condition, but increased length of dark-grown hypocotyls, reduced responsiveness of hypocotyls to light and increased responsiveness to brassinolide (BL).</text>
</comment>
<comment type="miscellaneous">
    <text>The gain-of-function mutant shk1-D (T-DNA tagging) shows a severe dwarf phenotype and an important reduction of the levels of the BRs castasterone (CS), 6-deoxocastasterone (6-deoxoCS) and 6-deoxotyphasterol (6-deoxoTY). The gain-of-function mutant chi2 show reduced length of hypocotyls grown in red, far-red and blue lights or darkeness. The gain of function mutant dlf1-D shows severe dwarf phenotype with low fertility.</text>
</comment>
<comment type="similarity">
    <text evidence="8">Belongs to the cytochrome P450 family.</text>
</comment>
<comment type="sequence caution" evidence="8">
    <conflict type="erroneous gene model prediction">
        <sequence resource="EMBL-CDS" id="AAD50024"/>
    </conflict>
</comment>
<comment type="sequence caution" evidence="8">
    <conflict type="frameshift">
        <sequence resource="EMBL-CDS" id="AAD50024"/>
    </conflict>
</comment>
<keyword id="KW-0341">Growth regulation</keyword>
<keyword id="KW-0349">Heme</keyword>
<keyword id="KW-0408">Iron</keyword>
<keyword id="KW-0472">Membrane</keyword>
<keyword id="KW-0479">Metal-binding</keyword>
<keyword id="KW-0503">Monooxygenase</keyword>
<keyword id="KW-0560">Oxidoreductase</keyword>
<keyword id="KW-1185">Reference proteome</keyword>
<keyword id="KW-0812">Transmembrane</keyword>
<keyword id="KW-1133">Transmembrane helix</keyword>
<protein>
    <recommendedName>
        <fullName>Cytochrome P450 72C1</fullName>
        <ecNumber>1.14.-.-</ecNumber>
    </recommendedName>
    <alternativeName>
        <fullName>Protein CHIBI 2</fullName>
    </alternativeName>
    <alternativeName>
        <fullName>Protein DWARFISH WITH LOW FERTILITY</fullName>
    </alternativeName>
    <alternativeName>
        <fullName>Protein SHRINK 1</fullName>
    </alternativeName>
    <alternativeName>
        <fullName>Protein SUPPRESSOR OF PHYB-4 PROTEIN 7</fullName>
    </alternativeName>
</protein>
<organism>
    <name type="scientific">Arabidopsis thaliana</name>
    <name type="common">Mouse-ear cress</name>
    <dbReference type="NCBI Taxonomy" id="3702"/>
    <lineage>
        <taxon>Eukaryota</taxon>
        <taxon>Viridiplantae</taxon>
        <taxon>Streptophyta</taxon>
        <taxon>Embryophyta</taxon>
        <taxon>Tracheophyta</taxon>
        <taxon>Spermatophyta</taxon>
        <taxon>Magnoliopsida</taxon>
        <taxon>eudicotyledons</taxon>
        <taxon>Gunneridae</taxon>
        <taxon>Pentapetalae</taxon>
        <taxon>rosids</taxon>
        <taxon>malvids</taxon>
        <taxon>Brassicales</taxon>
        <taxon>Brassicaceae</taxon>
        <taxon>Camelineae</taxon>
        <taxon>Arabidopsis</taxon>
    </lineage>
</organism>
<proteinExistence type="evidence at transcript level"/>
<gene>
    <name type="primary">CYP72C1</name>
    <name type="synonym">CHI2</name>
    <name type="synonym">DLF</name>
    <name type="synonym">SHK1</name>
    <name type="synonym">SOB7</name>
    <name type="ordered locus">At1g17060</name>
    <name type="ORF">F20D23.24</name>
</gene>
<feature type="chain" id="PRO_0000411194" description="Cytochrome P450 72C1">
    <location>
        <begin position="1"/>
        <end position="519"/>
    </location>
</feature>
<feature type="transmembrane region" description="Helical" evidence="2">
    <location>
        <begin position="10"/>
        <end position="30"/>
    </location>
</feature>
<feature type="binding site" description="axial binding residue" evidence="1">
    <location>
        <position position="467"/>
    </location>
    <ligand>
        <name>heme</name>
        <dbReference type="ChEBI" id="CHEBI:30413"/>
    </ligand>
    <ligandPart>
        <name>Fe</name>
        <dbReference type="ChEBI" id="CHEBI:18248"/>
    </ligandPart>
</feature>
<feature type="sequence conflict" description="In Ref. 3; AK229082." evidence="8" ref="3">
    <original>D</original>
    <variation>G</variation>
    <location>
        <position position="350"/>
    </location>
</feature>
<sequence length="519" mass="59594">MLEIITVRKVFLIGFLILILNWVWRAVNWVWLRPKRLEKYLKKQGFSGNSYRILMGDMRESNQMDQVAHSLPLPLDADFLPRMMPFLHHTVLKHGKKCFTWYGPYPNVIVMDPETLREIMSKHELFPKPKIGSHNHVFLSGLLNHEGPKWSKHRSILNPAFRIDNLKSILPAFNSSCKEMLEEWERLASAKGTMELDSWTHCHDLTRNMLARASFGDSYKDGIKIFEIQQEQIDLGLLAIRAVYIPGSKFLPTKFNRRLRETERDMRAMFKAMIETKEEEIKRGRGTDKNSDLLFSMLASNTKTIKEQGPDSGLSLDDLIDDCKAFYLAGQNVTSSLFVWTLVALSQHQDWQNKARDEISQAFGNNEPDFEGLSHLKVVTMILHEVLRLYSPAYFTCRITKQEVKLERFSLPEGVVVTIPMLLVHHDSDLWGDDVKEFKPERFANGVAGATKGRLSFLPFSSGPRTCIGQNFSMLQAKLFLAMVLQRFSVELSPSYTHAPFPAATTFPQHGAHLIIRKL</sequence>
<reference key="1">
    <citation type="journal article" date="2000" name="Nature">
        <title>Sequence and analysis of chromosome 1 of the plant Arabidopsis thaliana.</title>
        <authorList>
            <person name="Theologis A."/>
            <person name="Ecker J.R."/>
            <person name="Palm C.J."/>
            <person name="Federspiel N.A."/>
            <person name="Kaul S."/>
            <person name="White O."/>
            <person name="Alonso J."/>
            <person name="Altafi H."/>
            <person name="Araujo R."/>
            <person name="Bowman C.L."/>
            <person name="Brooks S.Y."/>
            <person name="Buehler E."/>
            <person name="Chan A."/>
            <person name="Chao Q."/>
            <person name="Chen H."/>
            <person name="Cheuk R.F."/>
            <person name="Chin C.W."/>
            <person name="Chung M.K."/>
            <person name="Conn L."/>
            <person name="Conway A.B."/>
            <person name="Conway A.R."/>
            <person name="Creasy T.H."/>
            <person name="Dewar K."/>
            <person name="Dunn P."/>
            <person name="Etgu P."/>
            <person name="Feldblyum T.V."/>
            <person name="Feng J.-D."/>
            <person name="Fong B."/>
            <person name="Fujii C.Y."/>
            <person name="Gill J.E."/>
            <person name="Goldsmith A.D."/>
            <person name="Haas B."/>
            <person name="Hansen N.F."/>
            <person name="Hughes B."/>
            <person name="Huizar L."/>
            <person name="Hunter J.L."/>
            <person name="Jenkins J."/>
            <person name="Johnson-Hopson C."/>
            <person name="Khan S."/>
            <person name="Khaykin E."/>
            <person name="Kim C.J."/>
            <person name="Koo H.L."/>
            <person name="Kremenetskaia I."/>
            <person name="Kurtz D.B."/>
            <person name="Kwan A."/>
            <person name="Lam B."/>
            <person name="Langin-Hooper S."/>
            <person name="Lee A."/>
            <person name="Lee J.M."/>
            <person name="Lenz C.A."/>
            <person name="Li J.H."/>
            <person name="Li Y.-P."/>
            <person name="Lin X."/>
            <person name="Liu S.X."/>
            <person name="Liu Z.A."/>
            <person name="Luros J.S."/>
            <person name="Maiti R."/>
            <person name="Marziali A."/>
            <person name="Militscher J."/>
            <person name="Miranda M."/>
            <person name="Nguyen M."/>
            <person name="Nierman W.C."/>
            <person name="Osborne B.I."/>
            <person name="Pai G."/>
            <person name="Peterson J."/>
            <person name="Pham P.K."/>
            <person name="Rizzo M."/>
            <person name="Rooney T."/>
            <person name="Rowley D."/>
            <person name="Sakano H."/>
            <person name="Salzberg S.L."/>
            <person name="Schwartz J.R."/>
            <person name="Shinn P."/>
            <person name="Southwick A.M."/>
            <person name="Sun H."/>
            <person name="Tallon L.J."/>
            <person name="Tambunga G."/>
            <person name="Toriumi M.J."/>
            <person name="Town C.D."/>
            <person name="Utterback T."/>
            <person name="Van Aken S."/>
            <person name="Vaysberg M."/>
            <person name="Vysotskaia V.S."/>
            <person name="Walker M."/>
            <person name="Wu D."/>
            <person name="Yu G."/>
            <person name="Fraser C.M."/>
            <person name="Venter J.C."/>
            <person name="Davis R.W."/>
        </authorList>
    </citation>
    <scope>NUCLEOTIDE SEQUENCE [LARGE SCALE GENOMIC DNA]</scope>
    <source>
        <strain>cv. Columbia</strain>
    </source>
</reference>
<reference key="2">
    <citation type="journal article" date="2017" name="Plant J.">
        <title>Araport11: a complete reannotation of the Arabidopsis thaliana reference genome.</title>
        <authorList>
            <person name="Cheng C.Y."/>
            <person name="Krishnakumar V."/>
            <person name="Chan A.P."/>
            <person name="Thibaud-Nissen F."/>
            <person name="Schobel S."/>
            <person name="Town C.D."/>
        </authorList>
    </citation>
    <scope>GENOME REANNOTATION</scope>
    <source>
        <strain>cv. Columbia</strain>
    </source>
</reference>
<reference key="3">
    <citation type="submission" date="2006-07" db="EMBL/GenBank/DDBJ databases">
        <title>Large-scale analysis of RIKEN Arabidopsis full-length (RAFL) cDNAs.</title>
        <authorList>
            <person name="Totoki Y."/>
            <person name="Seki M."/>
            <person name="Ishida J."/>
            <person name="Nakajima M."/>
            <person name="Enju A."/>
            <person name="Kamiya A."/>
            <person name="Narusaka M."/>
            <person name="Shin-i T."/>
            <person name="Nakagawa M."/>
            <person name="Sakamoto N."/>
            <person name="Oishi K."/>
            <person name="Kohara Y."/>
            <person name="Kobayashi M."/>
            <person name="Toyoda A."/>
            <person name="Sakaki Y."/>
            <person name="Sakurai T."/>
            <person name="Iida K."/>
            <person name="Akiyama K."/>
            <person name="Satou M."/>
            <person name="Toyoda T."/>
            <person name="Konagaya A."/>
            <person name="Carninci P."/>
            <person name="Kawai J."/>
            <person name="Hayashizaki Y."/>
            <person name="Shinozaki K."/>
        </authorList>
    </citation>
    <scope>NUCLEOTIDE SEQUENCE [LARGE SCALE MRNA]</scope>
    <source>
        <strain>cv. Columbia</strain>
    </source>
</reference>
<reference key="4">
    <citation type="journal article" date="2005" name="J. Exp. Bot.">
        <title>Activation of the cytochrome P450 gene, CYP72C1, reduces the levels of active brassinosteroids in vivo.</title>
        <authorList>
            <person name="Nakamura M."/>
            <person name="Satoh T."/>
            <person name="Tanaka S."/>
            <person name="Mochizuki N."/>
            <person name="Yokota T."/>
            <person name="Nagatani A."/>
        </authorList>
    </citation>
    <scope>FUNCTION</scope>
    <scope>INDUCTION</scope>
    <source>
        <strain>cv. Landsberg erecta</strain>
    </source>
</reference>
<reference key="5">
    <citation type="journal article" date="2005" name="Plant J.">
        <title>shk1-D, a dwarf Arabidopsis mutant caused by activation of the CYP72C1 gene, has altered brassinosteroid levels.</title>
        <authorList>
            <person name="Takahashi N."/>
            <person name="Nakazawa M."/>
            <person name="Shibata K."/>
            <person name="Yokota T."/>
            <person name="Ishikawa A."/>
            <person name="Suzuki K."/>
            <person name="Kawashima M."/>
            <person name="Ichikawa T."/>
            <person name="Shimada H."/>
            <person name="Matsui M."/>
        </authorList>
    </citation>
    <scope>FUNCTION</scope>
    <scope>TISSUE SPECIFICITY</scope>
    <scope>INDUCTION</scope>
    <scope>DISRUPTION PHENOTYPE</scope>
</reference>
<reference key="6">
    <citation type="journal article" date="2005" name="Plant J.">
        <title>BAS1 and SOB7 act redundantly to modulate Arabidopsis photomorphogenesis via unique brassinosteroid inactivation mechanisms.</title>
        <authorList>
            <person name="Turk E.M."/>
            <person name="Fujioka S."/>
            <person name="Seto H."/>
            <person name="Shimada Y."/>
            <person name="Takatsuto S."/>
            <person name="Yoshida S."/>
            <person name="Wang H."/>
            <person name="Torres Q.I."/>
            <person name="Ward J.M."/>
            <person name="Murthy G."/>
            <person name="Zhang J."/>
            <person name="Walker J.C."/>
            <person name="Neff M.M."/>
        </authorList>
    </citation>
    <scope>FUNCTION</scope>
    <scope>TISSUE SPECIFICITY</scope>
    <scope>DISRUPTION PHENOTYPE</scope>
</reference>
<reference key="7">
    <citation type="journal article" date="2010" name="Mol. Cells">
        <title>A transcriptional feedback loop modulating signaling crosstalks between auxin and brassinosteroid in Arabidopsis.</title>
        <authorList>
            <person name="Jung J.H."/>
            <person name="Lee M."/>
            <person name="Park C.M."/>
        </authorList>
    </citation>
    <scope>FUNCTION</scope>
    <scope>DISRUPTION PHENOTYPE</scope>
</reference>
<reference key="8">
    <citation type="journal article" date="2010" name="Plant Mol. Biol.">
        <title>Arabidopsis CYP72C1 is an atypical cytochrome P450 that inactivates brassinosteroids.</title>
        <authorList>
            <person name="Thornton L.E."/>
            <person name="Rupasinghe S.G."/>
            <person name="Peng H."/>
            <person name="Schuler M.A."/>
            <person name="Neff M.M."/>
        </authorList>
    </citation>
    <scope>FUNCTION</scope>
</reference>
<name>C72C1_ARATH</name>
<evidence type="ECO:0000250" key="1"/>
<evidence type="ECO:0000255" key="2"/>
<evidence type="ECO:0000269" key="3">
    <source>
    </source>
</evidence>
<evidence type="ECO:0000269" key="4">
    <source>
    </source>
</evidence>
<evidence type="ECO:0000269" key="5">
    <source>
    </source>
</evidence>
<evidence type="ECO:0000269" key="6">
    <source>
    </source>
</evidence>
<evidence type="ECO:0000269" key="7">
    <source>
    </source>
</evidence>
<evidence type="ECO:0000305" key="8"/>
<accession>Q9SHG5</accession>